<protein>
    <recommendedName>
        <fullName evidence="1">GMP synthase [glutamine-hydrolyzing]</fullName>
        <ecNumber evidence="1">6.3.5.2</ecNumber>
    </recommendedName>
    <alternativeName>
        <fullName evidence="1">GMP synthetase</fullName>
    </alternativeName>
    <alternativeName>
        <fullName evidence="1">Glutamine amidotransferase</fullName>
    </alternativeName>
</protein>
<evidence type="ECO:0000255" key="1">
    <source>
        <dbReference type="HAMAP-Rule" id="MF_00344"/>
    </source>
</evidence>
<feature type="chain" id="PRO_0000229440" description="GMP synthase [glutamine-hydrolyzing]">
    <location>
        <begin position="1"/>
        <end position="503"/>
    </location>
</feature>
<feature type="domain" description="Glutamine amidotransferase type-1" evidence="1">
    <location>
        <begin position="1"/>
        <end position="178"/>
    </location>
</feature>
<feature type="domain" description="GMPS ATP-PPase" evidence="1">
    <location>
        <begin position="179"/>
        <end position="377"/>
    </location>
</feature>
<feature type="active site" description="Nucleophile" evidence="1">
    <location>
        <position position="60"/>
    </location>
</feature>
<feature type="active site" evidence="1">
    <location>
        <position position="152"/>
    </location>
</feature>
<feature type="active site" evidence="1">
    <location>
        <position position="154"/>
    </location>
</feature>
<feature type="binding site" evidence="1">
    <location>
        <begin position="206"/>
        <end position="212"/>
    </location>
    <ligand>
        <name>ATP</name>
        <dbReference type="ChEBI" id="CHEBI:30616"/>
    </ligand>
</feature>
<accession>Q6AD51</accession>
<proteinExistence type="inferred from homology"/>
<dbReference type="EC" id="6.3.5.2" evidence="1"/>
<dbReference type="EMBL" id="AE016822">
    <property type="protein sequence ID" value="AAT89693.1"/>
    <property type="molecule type" value="Genomic_DNA"/>
</dbReference>
<dbReference type="SMR" id="Q6AD51"/>
<dbReference type="STRING" id="281090.Lxx19780"/>
<dbReference type="MEROPS" id="C26.A07"/>
<dbReference type="KEGG" id="lxx:Lxx19780"/>
<dbReference type="eggNOG" id="COG0518">
    <property type="taxonomic scope" value="Bacteria"/>
</dbReference>
<dbReference type="eggNOG" id="COG0519">
    <property type="taxonomic scope" value="Bacteria"/>
</dbReference>
<dbReference type="HOGENOM" id="CLU_014340_0_5_11"/>
<dbReference type="UniPathway" id="UPA00189">
    <property type="reaction ID" value="UER00296"/>
</dbReference>
<dbReference type="Proteomes" id="UP000001306">
    <property type="component" value="Chromosome"/>
</dbReference>
<dbReference type="GO" id="GO:0005829">
    <property type="term" value="C:cytosol"/>
    <property type="evidence" value="ECO:0007669"/>
    <property type="project" value="TreeGrafter"/>
</dbReference>
<dbReference type="GO" id="GO:0005524">
    <property type="term" value="F:ATP binding"/>
    <property type="evidence" value="ECO:0007669"/>
    <property type="project" value="UniProtKB-UniRule"/>
</dbReference>
<dbReference type="GO" id="GO:0003921">
    <property type="term" value="F:GMP synthase activity"/>
    <property type="evidence" value="ECO:0007669"/>
    <property type="project" value="InterPro"/>
</dbReference>
<dbReference type="CDD" id="cd01742">
    <property type="entry name" value="GATase1_GMP_Synthase"/>
    <property type="match status" value="1"/>
</dbReference>
<dbReference type="CDD" id="cd01997">
    <property type="entry name" value="GMP_synthase_C"/>
    <property type="match status" value="1"/>
</dbReference>
<dbReference type="FunFam" id="3.30.300.10:FF:000002">
    <property type="entry name" value="GMP synthase [glutamine-hydrolyzing]"/>
    <property type="match status" value="1"/>
</dbReference>
<dbReference type="FunFam" id="3.40.50.620:FF:000001">
    <property type="entry name" value="GMP synthase [glutamine-hydrolyzing]"/>
    <property type="match status" value="1"/>
</dbReference>
<dbReference type="Gene3D" id="3.30.300.10">
    <property type="match status" value="1"/>
</dbReference>
<dbReference type="Gene3D" id="3.40.50.880">
    <property type="match status" value="1"/>
</dbReference>
<dbReference type="Gene3D" id="3.40.50.620">
    <property type="entry name" value="HUPs"/>
    <property type="match status" value="1"/>
</dbReference>
<dbReference type="HAMAP" id="MF_00344">
    <property type="entry name" value="GMP_synthase"/>
    <property type="match status" value="1"/>
</dbReference>
<dbReference type="InterPro" id="IPR029062">
    <property type="entry name" value="Class_I_gatase-like"/>
</dbReference>
<dbReference type="InterPro" id="IPR017926">
    <property type="entry name" value="GATASE"/>
</dbReference>
<dbReference type="InterPro" id="IPR001674">
    <property type="entry name" value="GMP_synth_C"/>
</dbReference>
<dbReference type="InterPro" id="IPR004739">
    <property type="entry name" value="GMP_synth_GATase"/>
</dbReference>
<dbReference type="InterPro" id="IPR022955">
    <property type="entry name" value="GMP_synthase"/>
</dbReference>
<dbReference type="InterPro" id="IPR025777">
    <property type="entry name" value="GMPS_ATP_PPase_dom"/>
</dbReference>
<dbReference type="InterPro" id="IPR022310">
    <property type="entry name" value="NAD/GMP_synthase"/>
</dbReference>
<dbReference type="InterPro" id="IPR014729">
    <property type="entry name" value="Rossmann-like_a/b/a_fold"/>
</dbReference>
<dbReference type="NCBIfam" id="TIGR00884">
    <property type="entry name" value="guaA_Cterm"/>
    <property type="match status" value="1"/>
</dbReference>
<dbReference type="NCBIfam" id="TIGR00888">
    <property type="entry name" value="guaA_Nterm"/>
    <property type="match status" value="1"/>
</dbReference>
<dbReference type="NCBIfam" id="NF000848">
    <property type="entry name" value="PRK00074.1"/>
    <property type="match status" value="1"/>
</dbReference>
<dbReference type="PANTHER" id="PTHR11922:SF2">
    <property type="entry name" value="GMP SYNTHASE [GLUTAMINE-HYDROLYZING]"/>
    <property type="match status" value="1"/>
</dbReference>
<dbReference type="PANTHER" id="PTHR11922">
    <property type="entry name" value="GMP SYNTHASE-RELATED"/>
    <property type="match status" value="1"/>
</dbReference>
<dbReference type="Pfam" id="PF00117">
    <property type="entry name" value="GATase"/>
    <property type="match status" value="1"/>
</dbReference>
<dbReference type="Pfam" id="PF00958">
    <property type="entry name" value="GMP_synt_C"/>
    <property type="match status" value="1"/>
</dbReference>
<dbReference type="Pfam" id="PF02540">
    <property type="entry name" value="NAD_synthase"/>
    <property type="match status" value="1"/>
</dbReference>
<dbReference type="PRINTS" id="PR00097">
    <property type="entry name" value="ANTSNTHASEII"/>
</dbReference>
<dbReference type="PRINTS" id="PR00096">
    <property type="entry name" value="GATASE"/>
</dbReference>
<dbReference type="SUPFAM" id="SSF52402">
    <property type="entry name" value="Adenine nucleotide alpha hydrolases-like"/>
    <property type="match status" value="1"/>
</dbReference>
<dbReference type="SUPFAM" id="SSF52317">
    <property type="entry name" value="Class I glutamine amidotransferase-like"/>
    <property type="match status" value="1"/>
</dbReference>
<dbReference type="SUPFAM" id="SSF54810">
    <property type="entry name" value="GMP synthetase C-terminal dimerisation domain"/>
    <property type="match status" value="1"/>
</dbReference>
<dbReference type="PROSITE" id="PS51273">
    <property type="entry name" value="GATASE_TYPE_1"/>
    <property type="match status" value="1"/>
</dbReference>
<dbReference type="PROSITE" id="PS51553">
    <property type="entry name" value="GMPS_ATP_PPASE"/>
    <property type="match status" value="1"/>
</dbReference>
<keyword id="KW-0067">ATP-binding</keyword>
<keyword id="KW-0315">Glutamine amidotransferase</keyword>
<keyword id="KW-0332">GMP biosynthesis</keyword>
<keyword id="KW-0436">Ligase</keyword>
<keyword id="KW-0547">Nucleotide-binding</keyword>
<keyword id="KW-0658">Purine biosynthesis</keyword>
<keyword id="KW-1185">Reference proteome</keyword>
<reference key="1">
    <citation type="journal article" date="2004" name="Mol. Plant Microbe Interact.">
        <title>The genome sequence of the Gram-positive sugarcane pathogen Leifsonia xyli subsp. xyli.</title>
        <authorList>
            <person name="Monteiro-Vitorello C.B."/>
            <person name="Camargo L.E.A."/>
            <person name="Van Sluys M.A."/>
            <person name="Kitajima J.P."/>
            <person name="Truffi D."/>
            <person name="do Amaral A.M."/>
            <person name="Harakava R."/>
            <person name="de Oliveira J.C.F."/>
            <person name="Wood D."/>
            <person name="de Oliveira M.C."/>
            <person name="Miyaki C.Y."/>
            <person name="Takita M.A."/>
            <person name="da Silva A.C.R."/>
            <person name="Furlan L.R."/>
            <person name="Carraro D.M."/>
            <person name="Camarotte G."/>
            <person name="Almeida N.F. Jr."/>
            <person name="Carrer H."/>
            <person name="Coutinho L.L."/>
            <person name="El-Dorry H.A."/>
            <person name="Ferro M.I.T."/>
            <person name="Gagliardi P.R."/>
            <person name="Giglioti E."/>
            <person name="Goldman M.H.S."/>
            <person name="Goldman G.H."/>
            <person name="Kimura E.T."/>
            <person name="Ferro E.S."/>
            <person name="Kuramae E.E."/>
            <person name="Lemos E.G.M."/>
            <person name="Lemos M.V.F."/>
            <person name="Mauro S.M.Z."/>
            <person name="Machado M.A."/>
            <person name="Marino C.L."/>
            <person name="Menck C.F."/>
            <person name="Nunes L.R."/>
            <person name="Oliveira R.C."/>
            <person name="Pereira G.G."/>
            <person name="Siqueira W."/>
            <person name="de Souza A.A."/>
            <person name="Tsai S.M."/>
            <person name="Zanca A.S."/>
            <person name="Simpson A.J.G."/>
            <person name="Brumbley S.M."/>
            <person name="Setubal J.C."/>
        </authorList>
    </citation>
    <scope>NUCLEOTIDE SEQUENCE [LARGE SCALE GENOMIC DNA]</scope>
    <source>
        <strain>CTCB07</strain>
    </source>
</reference>
<sequence length="503" mass="53580">MREANVYSEIVPHTVTAADIAAKRPAGIILSGGPSSVYEEGAPRLDEGIFELGVPVLGICYGFQVMAVALGGEVAKTGHREYGSTAVRVSAGARGGAGFLLDGQPGDQTVWMSHGDSVAKAPEGFDVLASTDDTPIAAFANDGRKLYGVQWHPEVKHSEHGQAVLENFLHRAAGIPADWNSGNVIADQVAAIRAQVGSGRVLCALSGGVDSAVAAALVHKAIGDQLVCVFVDHGLLRRDEARQVQEDYVSATGVRLITVDAEEQFLAALESVSDPEAKRKIIGREFIRVFERAQADLVAEAASEGDPIRFLVQGTLYPDVVESGGGAGTANIKSHHNVSGLPEDLQFELVEPLCTLFKDEVRAIGRELGLPEVIVGRQPFPGPGLGIRIVGDVTRERLDLLRDADAIVRAELTAAGLDSEIWQCPVVLLADVRSVGVQGDGRTYGHPIVLRPVSSEDAMTADWTRLPYHLLAKISNRITNEVEGVNRVVLDVTSKPPGTIEWE</sequence>
<comment type="function">
    <text evidence="1">Catalyzes the synthesis of GMP from XMP.</text>
</comment>
<comment type="catalytic activity">
    <reaction evidence="1">
        <text>XMP + L-glutamine + ATP + H2O = GMP + L-glutamate + AMP + diphosphate + 2 H(+)</text>
        <dbReference type="Rhea" id="RHEA:11680"/>
        <dbReference type="ChEBI" id="CHEBI:15377"/>
        <dbReference type="ChEBI" id="CHEBI:15378"/>
        <dbReference type="ChEBI" id="CHEBI:29985"/>
        <dbReference type="ChEBI" id="CHEBI:30616"/>
        <dbReference type="ChEBI" id="CHEBI:33019"/>
        <dbReference type="ChEBI" id="CHEBI:57464"/>
        <dbReference type="ChEBI" id="CHEBI:58115"/>
        <dbReference type="ChEBI" id="CHEBI:58359"/>
        <dbReference type="ChEBI" id="CHEBI:456215"/>
        <dbReference type="EC" id="6.3.5.2"/>
    </reaction>
</comment>
<comment type="pathway">
    <text evidence="1">Purine metabolism; GMP biosynthesis; GMP from XMP (L-Gln route): step 1/1.</text>
</comment>
<comment type="subunit">
    <text evidence="1">Homodimer.</text>
</comment>
<gene>
    <name evidence="1" type="primary">guaA</name>
    <name type="ordered locus">Lxx19780</name>
</gene>
<name>GUAA_LEIXX</name>
<organism>
    <name type="scientific">Leifsonia xyli subsp. xyli (strain CTCB07)</name>
    <dbReference type="NCBI Taxonomy" id="281090"/>
    <lineage>
        <taxon>Bacteria</taxon>
        <taxon>Bacillati</taxon>
        <taxon>Actinomycetota</taxon>
        <taxon>Actinomycetes</taxon>
        <taxon>Micrococcales</taxon>
        <taxon>Microbacteriaceae</taxon>
        <taxon>Leifsonia</taxon>
    </lineage>
</organism>